<feature type="initiator methionine" description="Removed" evidence="7 10">
    <location>
        <position position="1"/>
    </location>
</feature>
<feature type="chain" id="PRO_0000114776" description="Homocysteine/cysteine synthase">
    <location>
        <begin position="2"/>
        <end position="444"/>
    </location>
</feature>
<feature type="modified residue" description="Phosphoserine" evidence="19 20">
    <location>
        <position position="44"/>
    </location>
</feature>
<feature type="modified residue" description="N6-(pyridoxal phosphate)lysine" evidence="1">
    <location>
        <position position="209"/>
    </location>
</feature>
<feature type="cross-link" description="Glycyl lysine isopeptide (Lys-Gly) (interchain with G-Cter in ubiquitin)" evidence="21">
    <location>
        <position position="160"/>
    </location>
</feature>
<feature type="helix" evidence="22">
    <location>
        <begin position="5"/>
        <end position="11"/>
    </location>
</feature>
<feature type="helix" evidence="22">
    <location>
        <begin position="62"/>
        <end position="75"/>
    </location>
</feature>
<feature type="strand" evidence="22">
    <location>
        <begin position="78"/>
        <end position="84"/>
    </location>
</feature>
<feature type="helix" evidence="22">
    <location>
        <begin position="86"/>
        <end position="95"/>
    </location>
</feature>
<feature type="strand" evidence="22">
    <location>
        <begin position="103"/>
        <end position="108"/>
    </location>
</feature>
<feature type="helix" evidence="22">
    <location>
        <begin position="112"/>
        <end position="119"/>
    </location>
</feature>
<feature type="helix" evidence="22">
    <location>
        <begin position="121"/>
        <end position="124"/>
    </location>
</feature>
<feature type="strand" evidence="22">
    <location>
        <begin position="128"/>
        <end position="132"/>
    </location>
</feature>
<feature type="helix" evidence="22">
    <location>
        <begin position="137"/>
        <end position="142"/>
    </location>
</feature>
<feature type="strand" evidence="22">
    <location>
        <begin position="148"/>
        <end position="156"/>
    </location>
</feature>
<feature type="turn" evidence="22">
    <location>
        <begin position="158"/>
        <end position="160"/>
    </location>
</feature>
<feature type="helix" evidence="22">
    <location>
        <begin position="166"/>
        <end position="175"/>
    </location>
</feature>
<feature type="strand" evidence="22">
    <location>
        <begin position="180"/>
        <end position="183"/>
    </location>
</feature>
<feature type="helix" evidence="22">
    <location>
        <begin position="185"/>
        <end position="187"/>
    </location>
</feature>
<feature type="turn" evidence="22">
    <location>
        <begin position="188"/>
        <end position="191"/>
    </location>
</feature>
<feature type="helix" evidence="22">
    <location>
        <begin position="195"/>
        <end position="198"/>
    </location>
</feature>
<feature type="strand" evidence="22">
    <location>
        <begin position="201"/>
        <end position="206"/>
    </location>
</feature>
<feature type="turn" evidence="22">
    <location>
        <begin position="207"/>
        <end position="212"/>
    </location>
</feature>
<feature type="strand" evidence="22">
    <location>
        <begin position="220"/>
        <end position="224"/>
    </location>
</feature>
<feature type="helix" evidence="22">
    <location>
        <begin position="230"/>
        <end position="232"/>
    </location>
</feature>
<feature type="turn" evidence="22">
    <location>
        <begin position="234"/>
        <end position="236"/>
    </location>
</feature>
<feature type="helix" evidence="22">
    <location>
        <begin position="238"/>
        <end position="241"/>
    </location>
</feature>
<feature type="helix" evidence="22">
    <location>
        <begin position="245"/>
        <end position="247"/>
    </location>
</feature>
<feature type="helix" evidence="22">
    <location>
        <begin position="252"/>
        <end position="256"/>
    </location>
</feature>
<feature type="helix" evidence="22">
    <location>
        <begin position="257"/>
        <end position="259"/>
    </location>
</feature>
<feature type="helix" evidence="22">
    <location>
        <begin position="260"/>
        <end position="267"/>
    </location>
</feature>
<feature type="helix" evidence="22">
    <location>
        <begin position="269"/>
        <end position="273"/>
    </location>
</feature>
<feature type="helix" evidence="22">
    <location>
        <begin position="279"/>
        <end position="289"/>
    </location>
</feature>
<feature type="helix" evidence="22">
    <location>
        <begin position="292"/>
        <end position="310"/>
    </location>
</feature>
<feature type="strand" evidence="22">
    <location>
        <begin position="316"/>
        <end position="320"/>
    </location>
</feature>
<feature type="helix" evidence="22">
    <location>
        <begin position="330"/>
        <end position="336"/>
    </location>
</feature>
<feature type="strand" evidence="22">
    <location>
        <begin position="343"/>
        <end position="349"/>
    </location>
</feature>
<feature type="turn" evidence="22">
    <location>
        <begin position="355"/>
        <end position="357"/>
    </location>
</feature>
<feature type="helix" evidence="22">
    <location>
        <begin position="361"/>
        <end position="363"/>
    </location>
</feature>
<feature type="helix" evidence="22">
    <location>
        <begin position="365"/>
        <end position="371"/>
    </location>
</feature>
<feature type="strand" evidence="22">
    <location>
        <begin position="374"/>
        <end position="378"/>
    </location>
</feature>
<feature type="strand" evidence="22">
    <location>
        <begin position="388"/>
        <end position="390"/>
    </location>
</feature>
<feature type="helix" evidence="22">
    <location>
        <begin position="392"/>
        <end position="394"/>
    </location>
</feature>
<feature type="strand" evidence="22">
    <location>
        <begin position="414"/>
        <end position="418"/>
    </location>
</feature>
<feature type="helix" evidence="22">
    <location>
        <begin position="424"/>
        <end position="438"/>
    </location>
</feature>
<comment type="function">
    <text evidence="3 4 5 7 8 16 17">Catalyzes the conversion of O-acetyl-L-homoserine (OAH) into homocysteine in the methionine biosynthesis pathway (PubMed:36379252, PubMed:36455053, PubMed:4609980, PubMed:7765825, PubMed:795806). Required to efficiently reduce toxic levels of hydrogen sulfide generated when the sulfate assimilation pathway (SAP) is active (PubMed:36379252, PubMed:36455053). Also catalyzes the conversion of O-acetylserine (OAS) into cysteine, the last step in the cysteine biosynthesis pathway (PubMed:36455053, PubMed:4609980, PubMed:7765825, PubMed:795806). However, it seems that in S.cerevisiae cysteine biosynthesis occurs exclusively through the cystathionine pathway and not via direct incorporation of sulfur into OAS (PubMed:1732168). It therefore has no metabolic role in cysteine biosynthesis and may only have a regulatory role controlling OAS levels (PubMed:12586406).</text>
</comment>
<comment type="catalytic activity">
    <reaction evidence="5 6 7 8">
        <text>O-acetyl-L-homoserine + methanethiol = L-methionine + acetate + H(+)</text>
        <dbReference type="Rhea" id="RHEA:10048"/>
        <dbReference type="ChEBI" id="CHEBI:15378"/>
        <dbReference type="ChEBI" id="CHEBI:16007"/>
        <dbReference type="ChEBI" id="CHEBI:30089"/>
        <dbReference type="ChEBI" id="CHEBI:57716"/>
        <dbReference type="ChEBI" id="CHEBI:57844"/>
        <dbReference type="EC" id="2.5.1.49"/>
    </reaction>
</comment>
<comment type="catalytic activity">
    <reaction evidence="3 4">
        <text>O-acetyl-L-homoserine + hydrogen sulfide = L-homocysteine + acetate</text>
        <dbReference type="Rhea" id="RHEA:27822"/>
        <dbReference type="ChEBI" id="CHEBI:29919"/>
        <dbReference type="ChEBI" id="CHEBI:30089"/>
        <dbReference type="ChEBI" id="CHEBI:57716"/>
        <dbReference type="ChEBI" id="CHEBI:58199"/>
        <dbReference type="EC" id="2.5.1.49"/>
    </reaction>
</comment>
<comment type="catalytic activity">
    <reaction evidence="5 7 8">
        <text>O-acetyl-L-serine + hydrogen sulfide = L-cysteine + acetate</text>
        <dbReference type="Rhea" id="RHEA:14829"/>
        <dbReference type="ChEBI" id="CHEBI:29919"/>
        <dbReference type="ChEBI" id="CHEBI:30089"/>
        <dbReference type="ChEBI" id="CHEBI:35235"/>
        <dbReference type="ChEBI" id="CHEBI:58340"/>
        <dbReference type="EC" id="2.5.1.47"/>
    </reaction>
</comment>
<comment type="cofactor">
    <cofactor evidence="5 6 7 8">
        <name>pyridoxal 5'-phosphate</name>
        <dbReference type="ChEBI" id="CHEBI:597326"/>
    </cofactor>
</comment>
<comment type="biophysicochemical properties">
    <kinetics>
        <KM evidence="7">8.7 mM for O-acetyl-L-homoserine</KM>
        <KM evidence="5">6.67 mM for O-acetyl-L-homoserine (at pH 7.8 in Tris-HCl buffer)</KM>
        <KM evidence="5">5.12 mM for O-acetyl-L-serine (at pH 7.8 in potassium phosphate buffer)</KM>
        <KM evidence="3">8.03 uM for O-acetyl-L-homoserine (OAH) (at 30 degrees Celsius in potassium phosphate buffer)</KM>
    </kinetics>
    <phDependence>
        <text evidence="5 6">Optimum pH is 7.8 (for O-acetylhomoserine sulfhydrylase activity in Tris-HCl buffer) and 8.4 (for both O-acetylhomoserine sulfhydrylase and O-acetylserine sulfhydrylase activities in barbital-HCl buffer).</text>
    </phDependence>
</comment>
<comment type="pathway">
    <text evidence="16 17">Amino-acid biosynthesis; L-methionine biosynthesis via de novo pathway; L-homocysteine from O-acetyl-L-homoserine.</text>
</comment>
<comment type="subunit">
    <text evidence="9">Homotetramer.</text>
</comment>
<comment type="subcellular location">
    <subcellularLocation>
        <location evidence="2">Cytoplasm</location>
    </subcellularLocation>
</comment>
<comment type="disruption phenotype">
    <text evidence="3 4">Loss of viability due to toxic accumulation of hydrogen sulfide, resembling methionine auxotrophy; cells can survive when grown at high density and at lower temperatures, simultaneous knockout of HSU1 exacerbates the effect (PubMed:36379252, PubMed:36455053). Increases expression of genes involved in sulfur assimilation, cysteine metabolism and methionine metabolism (PubMed:36455053).</text>
</comment>
<comment type="similarity">
    <text evidence="15">Belongs to the trans-sulfuration enzymes family.</text>
</comment>
<sequence>MPSHFDTVQLHAGQENPGDNAHRSRAVPIYATTSYVFENSKHGSQLFGLEVPGYVYSRFQNPTSNVLEERIAALEGGAAALAVSSGQAAQTLAIQGLAHTGDNIVSTSYLYGGTYNQFKISFKRFGIEARFVEGDNPEEFEKVFDERTKAVYLETIGNPKYNVPDFEKIVAIAHKHGIPVVVDNTFGAGGYFCQPIKYGADIVTHSATKWIGGHGTTIGGIIVDSGKFPWKDYPEKFPQFSQPAEGYHGTIYNEAYGNLAYIVHVRTELLRDLGPLMNPFASFLLLQGVETLSLRAERHGENALKLAKWLEQSPYVSWVSYPGLASHSHHENAKKYLSNGFGGVLSFGVKDLPNADKETDPFKLSGAQVVDNLKLASNLANVGDAKTLVIAPYFTTHKQLNDKEKLASGVTKDLIRVSVGIEFIDDIIADFQQSFETVFAGQKP</sequence>
<keyword id="KW-0002">3D-structure</keyword>
<keyword id="KW-0028">Amino-acid biosynthesis</keyword>
<keyword id="KW-0963">Cytoplasm</keyword>
<keyword id="KW-0903">Direct protein sequencing</keyword>
<keyword id="KW-1017">Isopeptide bond</keyword>
<keyword id="KW-0486">Methionine biosynthesis</keyword>
<keyword id="KW-0597">Phosphoprotein</keyword>
<keyword id="KW-0663">Pyridoxal phosphate</keyword>
<keyword id="KW-1185">Reference proteome</keyword>
<keyword id="KW-0808">Transferase</keyword>
<keyword id="KW-0832">Ubl conjugation</keyword>
<name>CYSD_YEAST</name>
<evidence type="ECO:0000250" key="1">
    <source>
        <dbReference type="UniProtKB" id="P06721"/>
    </source>
</evidence>
<evidence type="ECO:0000269" key="2">
    <source>
    </source>
</evidence>
<evidence type="ECO:0000269" key="3">
    <source>
    </source>
</evidence>
<evidence type="ECO:0000269" key="4">
    <source>
    </source>
</evidence>
<evidence type="ECO:0000269" key="5">
    <source>
    </source>
</evidence>
<evidence type="ECO:0000269" key="6">
    <source>
    </source>
</evidence>
<evidence type="ECO:0000269" key="7">
    <source>
    </source>
</evidence>
<evidence type="ECO:0000269" key="8">
    <source>
    </source>
</evidence>
<evidence type="ECO:0000269" key="9">
    <source>
    </source>
</evidence>
<evidence type="ECO:0000269" key="10">
    <source>
    </source>
</evidence>
<evidence type="ECO:0000303" key="11">
    <source>
    </source>
</evidence>
<evidence type="ECO:0000303" key="12">
    <source>
    </source>
</evidence>
<evidence type="ECO:0000303" key="13">
    <source>
    </source>
</evidence>
<evidence type="ECO:0000303" key="14">
    <source>
    </source>
</evidence>
<evidence type="ECO:0000305" key="15"/>
<evidence type="ECO:0000305" key="16">
    <source>
    </source>
</evidence>
<evidence type="ECO:0000305" key="17">
    <source>
    </source>
</evidence>
<evidence type="ECO:0000312" key="18">
    <source>
        <dbReference type="SGD" id="S000004294"/>
    </source>
</evidence>
<evidence type="ECO:0007744" key="19">
    <source>
    </source>
</evidence>
<evidence type="ECO:0007744" key="20">
    <source>
    </source>
</evidence>
<evidence type="ECO:0007744" key="21">
    <source>
    </source>
</evidence>
<evidence type="ECO:0007829" key="22">
    <source>
        <dbReference type="PDB" id="8OVH"/>
    </source>
</evidence>
<proteinExistence type="evidence at protein level"/>
<gene>
    <name evidence="14" type="primary">MET17</name>
    <name evidence="11" type="synonym">MET15</name>
    <name evidence="12" type="synonym">MET25</name>
    <name evidence="18" type="ordered locus">YLR303W</name>
    <name type="ORF">L8003.1</name>
</gene>
<protein>
    <recommendedName>
        <fullName evidence="15">Homocysteine/cysteine synthase</fullName>
        <ecNumber evidence="5">2.5.1.47</ecNumber>
        <ecNumber evidence="3 4 5 6">2.5.1.49</ecNumber>
    </recommendedName>
    <alternativeName>
        <fullName evidence="14">O-acetylserine/O-acetylhomoserine sulfhydrylase</fullName>
        <shortName evidence="14">OAS-OAH SHLase</shortName>
        <shortName evidence="13">OAS-OAH sulfhydrylase</shortName>
    </alternativeName>
</protein>
<organism>
    <name type="scientific">Saccharomyces cerevisiae (strain ATCC 204508 / S288c)</name>
    <name type="common">Baker's yeast</name>
    <dbReference type="NCBI Taxonomy" id="559292"/>
    <lineage>
        <taxon>Eukaryota</taxon>
        <taxon>Fungi</taxon>
        <taxon>Dikarya</taxon>
        <taxon>Ascomycota</taxon>
        <taxon>Saccharomycotina</taxon>
        <taxon>Saccharomycetes</taxon>
        <taxon>Saccharomycetales</taxon>
        <taxon>Saccharomycetaceae</taxon>
        <taxon>Saccharomyces</taxon>
    </lineage>
</organism>
<accession>P06106</accession>
<accession>D6VYU6</accession>
<dbReference type="EC" id="2.5.1.47" evidence="5"/>
<dbReference type="EC" id="2.5.1.49" evidence="3 4 5 6"/>
<dbReference type="EMBL" id="X04493">
    <property type="protein sequence ID" value="CAA28181.1"/>
    <property type="molecule type" value="Genomic_DNA"/>
</dbReference>
<dbReference type="EMBL" id="U17243">
    <property type="protein sequence ID" value="AAB67347.1"/>
    <property type="molecule type" value="Genomic_DNA"/>
</dbReference>
<dbReference type="EMBL" id="AY723848">
    <property type="protein sequence ID" value="AAU09765.1"/>
    <property type="molecule type" value="Genomic_DNA"/>
</dbReference>
<dbReference type="EMBL" id="BK006945">
    <property type="protein sequence ID" value="DAA09612.1"/>
    <property type="molecule type" value="Genomic_DNA"/>
</dbReference>
<dbReference type="PIR" id="A25539">
    <property type="entry name" value="A25539"/>
</dbReference>
<dbReference type="RefSeq" id="NP_013406.1">
    <property type="nucleotide sequence ID" value="NM_001182191.1"/>
</dbReference>
<dbReference type="PDB" id="8OVH">
    <property type="method" value="X-ray"/>
    <property type="resolution" value="2.17 A"/>
    <property type="chains" value="A/B/C/D=1-444"/>
</dbReference>
<dbReference type="PDBsum" id="8OVH"/>
<dbReference type="SMR" id="P06106"/>
<dbReference type="BioGRID" id="31567">
    <property type="interactions" value="123"/>
</dbReference>
<dbReference type="DIP" id="DIP-1664N"/>
<dbReference type="FunCoup" id="P06106">
    <property type="interactions" value="286"/>
</dbReference>
<dbReference type="IntAct" id="P06106">
    <property type="interactions" value="5"/>
</dbReference>
<dbReference type="MINT" id="P06106"/>
<dbReference type="STRING" id="4932.YLR303W"/>
<dbReference type="CarbonylDB" id="P06106"/>
<dbReference type="iPTMnet" id="P06106"/>
<dbReference type="PaxDb" id="4932-YLR303W"/>
<dbReference type="PeptideAtlas" id="P06106"/>
<dbReference type="EnsemblFungi" id="YLR303W_mRNA">
    <property type="protein sequence ID" value="YLR303W"/>
    <property type="gene ID" value="YLR303W"/>
</dbReference>
<dbReference type="GeneID" id="851010"/>
<dbReference type="KEGG" id="sce:YLR303W"/>
<dbReference type="AGR" id="SGD:S000004294"/>
<dbReference type="SGD" id="S000004294">
    <property type="gene designation" value="MET17"/>
</dbReference>
<dbReference type="VEuPathDB" id="FungiDB:YLR303W"/>
<dbReference type="eggNOG" id="KOG0053">
    <property type="taxonomic scope" value="Eukaryota"/>
</dbReference>
<dbReference type="HOGENOM" id="CLU_018986_4_0_1"/>
<dbReference type="InParanoid" id="P06106"/>
<dbReference type="OMA" id="NAFQIIQ"/>
<dbReference type="OrthoDB" id="3512640at2759"/>
<dbReference type="BioCyc" id="MetaCyc:YLR303W-MONOMER"/>
<dbReference type="BioCyc" id="YEAST:YLR303W-MONOMER"/>
<dbReference type="BioGRID-ORCS" id="851010">
    <property type="hits" value="0 hits in 10 CRISPR screens"/>
</dbReference>
<dbReference type="ChiTaRS" id="MET17">
    <property type="organism name" value="yeast"/>
</dbReference>
<dbReference type="PRO" id="PR:P06106"/>
<dbReference type="Proteomes" id="UP000002311">
    <property type="component" value="Chromosome XII"/>
</dbReference>
<dbReference type="RNAct" id="P06106">
    <property type="molecule type" value="protein"/>
</dbReference>
<dbReference type="GO" id="GO:0005737">
    <property type="term" value="C:cytoplasm"/>
    <property type="evidence" value="ECO:0007005"/>
    <property type="project" value="SGD"/>
</dbReference>
<dbReference type="GO" id="GO:0005886">
    <property type="term" value="C:plasma membrane"/>
    <property type="evidence" value="ECO:0007005"/>
    <property type="project" value="SGD"/>
</dbReference>
<dbReference type="GO" id="GO:0004124">
    <property type="term" value="F:cysteine synthase activity"/>
    <property type="evidence" value="ECO:0000314"/>
    <property type="project" value="SGD"/>
</dbReference>
<dbReference type="GO" id="GO:0003961">
    <property type="term" value="F:O-acetylhomoserine aminocarboxypropyltransferase activity"/>
    <property type="evidence" value="ECO:0000314"/>
    <property type="project" value="UniProtKB"/>
</dbReference>
<dbReference type="GO" id="GO:0051009">
    <property type="term" value="F:O-acetylhomoserine sulfhydrylase activity"/>
    <property type="evidence" value="ECO:0000314"/>
    <property type="project" value="SGD"/>
</dbReference>
<dbReference type="GO" id="GO:0030170">
    <property type="term" value="F:pyridoxal phosphate binding"/>
    <property type="evidence" value="ECO:0007669"/>
    <property type="project" value="InterPro"/>
</dbReference>
<dbReference type="GO" id="GO:0019344">
    <property type="term" value="P:cysteine biosynthetic process"/>
    <property type="evidence" value="ECO:0000304"/>
    <property type="project" value="SGD"/>
</dbReference>
<dbReference type="GO" id="GO:0071269">
    <property type="term" value="P:L-homocysteine biosynthetic process"/>
    <property type="evidence" value="ECO:0000314"/>
    <property type="project" value="UniProtKB"/>
</dbReference>
<dbReference type="GO" id="GO:0006555">
    <property type="term" value="P:methionine metabolic process"/>
    <property type="evidence" value="ECO:0000315"/>
    <property type="project" value="SGD"/>
</dbReference>
<dbReference type="GO" id="GO:0000103">
    <property type="term" value="P:sulfate assimilation"/>
    <property type="evidence" value="ECO:0000315"/>
    <property type="project" value="UniProtKB"/>
</dbReference>
<dbReference type="GO" id="GO:0019346">
    <property type="term" value="P:transsulfuration"/>
    <property type="evidence" value="ECO:0007669"/>
    <property type="project" value="InterPro"/>
</dbReference>
<dbReference type="CDD" id="cd00614">
    <property type="entry name" value="CGS_like"/>
    <property type="match status" value="1"/>
</dbReference>
<dbReference type="FunFam" id="3.90.1150.10:FF:000083">
    <property type="entry name" value="O-acetylhomoserine sulfhydrylase"/>
    <property type="match status" value="1"/>
</dbReference>
<dbReference type="FunFam" id="3.40.640.10:FF:000035">
    <property type="entry name" value="O-succinylhomoserine sulfhydrylase"/>
    <property type="match status" value="1"/>
</dbReference>
<dbReference type="Gene3D" id="3.90.1150.10">
    <property type="entry name" value="Aspartate Aminotransferase, domain 1"/>
    <property type="match status" value="1"/>
</dbReference>
<dbReference type="Gene3D" id="3.40.640.10">
    <property type="entry name" value="Type I PLP-dependent aspartate aminotransferase-like (Major domain)"/>
    <property type="match status" value="1"/>
</dbReference>
<dbReference type="InterPro" id="IPR000277">
    <property type="entry name" value="Cys/Met-Metab_PyrdxlP-dep_enz"/>
</dbReference>
<dbReference type="InterPro" id="IPR054542">
    <property type="entry name" value="Cys_met_metab_PP"/>
</dbReference>
<dbReference type="InterPro" id="IPR006235">
    <property type="entry name" value="OAc-hSer/O-AcSer_sulfhydrylase"/>
</dbReference>
<dbReference type="InterPro" id="IPR015424">
    <property type="entry name" value="PyrdxlP-dep_Trfase"/>
</dbReference>
<dbReference type="InterPro" id="IPR015421">
    <property type="entry name" value="PyrdxlP-dep_Trfase_major"/>
</dbReference>
<dbReference type="InterPro" id="IPR015422">
    <property type="entry name" value="PyrdxlP-dep_Trfase_small"/>
</dbReference>
<dbReference type="NCBIfam" id="TIGR01326">
    <property type="entry name" value="OAH_OAS_sulfhy"/>
    <property type="match status" value="1"/>
</dbReference>
<dbReference type="PANTHER" id="PTHR43797">
    <property type="entry name" value="HOMOCYSTEINE/CYSTEINE SYNTHASE"/>
    <property type="match status" value="1"/>
</dbReference>
<dbReference type="PANTHER" id="PTHR43797:SF2">
    <property type="entry name" value="HOMOCYSTEINE_CYSTEINE SYNTHASE"/>
    <property type="match status" value="1"/>
</dbReference>
<dbReference type="Pfam" id="PF01053">
    <property type="entry name" value="Cys_Met_Meta_PP"/>
    <property type="match status" value="1"/>
</dbReference>
<dbReference type="PIRSF" id="PIRSF001434">
    <property type="entry name" value="CGS"/>
    <property type="match status" value="1"/>
</dbReference>
<dbReference type="SUPFAM" id="SSF53383">
    <property type="entry name" value="PLP-dependent transferases"/>
    <property type="match status" value="1"/>
</dbReference>
<dbReference type="PROSITE" id="PS00868">
    <property type="entry name" value="CYS_MET_METAB_PP"/>
    <property type="match status" value="1"/>
</dbReference>
<reference key="1">
    <citation type="journal article" date="1986" name="Nucleic Acids Res.">
        <title>Nucleotide sequence of the Saccharomyces cerevisiae MET25 gene.</title>
        <authorList>
            <person name="Kerjan P."/>
            <person name="Cherest H."/>
            <person name="Surdin-Kerjan Y."/>
        </authorList>
    </citation>
    <scope>NUCLEOTIDE SEQUENCE [GENOMIC DNA]</scope>
    <source>
        <strain>ATCC 28383 / FL100 / VTT C-80102</strain>
    </source>
</reference>
<reference key="2">
    <citation type="journal article" date="1997" name="Nature">
        <title>The nucleotide sequence of Saccharomyces cerevisiae chromosome XII.</title>
        <authorList>
            <person name="Johnston M."/>
            <person name="Hillier L.W."/>
            <person name="Riles L."/>
            <person name="Albermann K."/>
            <person name="Andre B."/>
            <person name="Ansorge W."/>
            <person name="Benes V."/>
            <person name="Brueckner M."/>
            <person name="Delius H."/>
            <person name="Dubois E."/>
            <person name="Duesterhoeft A."/>
            <person name="Entian K.-D."/>
            <person name="Floeth M."/>
            <person name="Goffeau A."/>
            <person name="Hebling U."/>
            <person name="Heumann K."/>
            <person name="Heuss-Neitzel D."/>
            <person name="Hilbert H."/>
            <person name="Hilger F."/>
            <person name="Kleine K."/>
            <person name="Koetter P."/>
            <person name="Louis E.J."/>
            <person name="Messenguy F."/>
            <person name="Mewes H.-W."/>
            <person name="Miosga T."/>
            <person name="Moestl D."/>
            <person name="Mueller-Auer S."/>
            <person name="Nentwich U."/>
            <person name="Obermaier B."/>
            <person name="Piravandi E."/>
            <person name="Pohl T.M."/>
            <person name="Portetelle D."/>
            <person name="Purnelle B."/>
            <person name="Rechmann S."/>
            <person name="Rieger M."/>
            <person name="Rinke M."/>
            <person name="Rose M."/>
            <person name="Scharfe M."/>
            <person name="Scherens B."/>
            <person name="Scholler P."/>
            <person name="Schwager C."/>
            <person name="Schwarz S."/>
            <person name="Underwood A.P."/>
            <person name="Urrestarazu L.A."/>
            <person name="Vandenbol M."/>
            <person name="Verhasselt P."/>
            <person name="Vierendeels F."/>
            <person name="Voet M."/>
            <person name="Volckaert G."/>
            <person name="Voss H."/>
            <person name="Wambutt R."/>
            <person name="Wedler E."/>
            <person name="Wedler H."/>
            <person name="Zimmermann F.K."/>
            <person name="Zollner A."/>
            <person name="Hani J."/>
            <person name="Hoheisel J.D."/>
        </authorList>
    </citation>
    <scope>NUCLEOTIDE SEQUENCE [LARGE SCALE GENOMIC DNA]</scope>
    <source>
        <strain>ATCC 204508 / S288c</strain>
    </source>
</reference>
<reference key="3">
    <citation type="journal article" date="2014" name="G3 (Bethesda)">
        <title>The reference genome sequence of Saccharomyces cerevisiae: Then and now.</title>
        <authorList>
            <person name="Engel S.R."/>
            <person name="Dietrich F.S."/>
            <person name="Fisk D.G."/>
            <person name="Binkley G."/>
            <person name="Balakrishnan R."/>
            <person name="Costanzo M.C."/>
            <person name="Dwight S.S."/>
            <person name="Hitz B.C."/>
            <person name="Karra K."/>
            <person name="Nash R.S."/>
            <person name="Weng S."/>
            <person name="Wong E.D."/>
            <person name="Lloyd P."/>
            <person name="Skrzypek M.S."/>
            <person name="Miyasato S.R."/>
            <person name="Simison M."/>
            <person name="Cherry J.M."/>
        </authorList>
    </citation>
    <scope>GENOME REANNOTATION</scope>
    <source>
        <strain>ATCC 204508 / S288c</strain>
    </source>
</reference>
<reference key="4">
    <citation type="journal article" date="2007" name="Genome Res.">
        <title>Approaching a complete repository of sequence-verified protein-encoding clones for Saccharomyces cerevisiae.</title>
        <authorList>
            <person name="Hu Y."/>
            <person name="Rolfs A."/>
            <person name="Bhullar B."/>
            <person name="Murthy T.V.S."/>
            <person name="Zhu C."/>
            <person name="Berger M.F."/>
            <person name="Camargo A.A."/>
            <person name="Kelley F."/>
            <person name="McCarron S."/>
            <person name="Jepson D."/>
            <person name="Richardson A."/>
            <person name="Raphael J."/>
            <person name="Moreira D."/>
            <person name="Taycher E."/>
            <person name="Zuo D."/>
            <person name="Mohr S."/>
            <person name="Kane M.F."/>
            <person name="Williamson J."/>
            <person name="Simpson A.J.G."/>
            <person name="Bulyk M.L."/>
            <person name="Harlow E."/>
            <person name="Marsischky G."/>
            <person name="Kolodner R.D."/>
            <person name="LaBaer J."/>
        </authorList>
    </citation>
    <scope>NUCLEOTIDE SEQUENCE [GENOMIC DNA]</scope>
    <source>
        <strain>ATCC 204508 / S288c</strain>
    </source>
</reference>
<reference key="5">
    <citation type="journal article" date="1994" name="Appl. Microbiol. Biotechnol.">
        <title>Overexpression of the Saccharomyces cerevisiae MET17/MET25 gene in Escherichia coli and comparative characterization of the product with O-acetylserine.O-acetylhomoserine sulfhydrylase of the yeast.</title>
        <authorList>
            <person name="Yamagata S."/>
            <person name="Isaji M."/>
            <person name="Nakamura K."/>
            <person name="Fujisaki S."/>
            <person name="Doi K."/>
            <person name="Bawden S."/>
            <person name="D'Andrea R."/>
        </authorList>
    </citation>
    <scope>PROTEIN SEQUENCE OF 2-21</scope>
    <scope>FUNCTION</scope>
    <scope>CATALYTIC ACTIVITY</scope>
    <scope>BIOPHYSICOCHEMICAL PROPERTIES</scope>
    <scope>COFACTOR</scope>
</reference>
<reference key="6">
    <citation type="journal article" date="1993" name="Yeast">
        <title>Cystathionine gamma-lyase of Saccharomyces cerevisiae: structural gene and cystathionine gamma-synthase activity.</title>
        <authorList>
            <person name="Ono B."/>
            <person name="Ishii N."/>
            <person name="Naito K."/>
            <person name="Miyoshi S."/>
            <person name="Shinoda S."/>
            <person name="Yamamoto S."/>
            <person name="Ohmori S."/>
        </authorList>
    </citation>
    <scope>PROTEIN SEQUENCE OF 2-10</scope>
</reference>
<reference key="7">
    <citation type="journal article" date="1996" name="FEMS Microbiol. Lett.">
        <title>Protein expression during exponential growth in 0.7 M NaCl medium of Saccharomyces cerevisiae.</title>
        <authorList>
            <person name="Norbeck J."/>
            <person name="Blomberg A."/>
        </authorList>
    </citation>
    <scope>PROTEIN SEQUENCE OF 131-140 AND 351-362</scope>
    <source>
        <strain>ATCC 38531 / Y41</strain>
    </source>
</reference>
<reference key="8">
    <citation type="journal article" date="1971" name="J. Biochem.">
        <title>Homocysteine synthesis in yeast. Partial purification and properties of O-acetylhomoserine sulfhydrylase.</title>
        <authorList>
            <person name="Yamagata S."/>
        </authorList>
    </citation>
    <scope>CATALYTIC ACTIVITY</scope>
    <scope>BIOPHYSICOCHEMICAL PROPERTIES</scope>
    <scope>COFACTOR</scope>
</reference>
<reference key="9">
    <citation type="journal article" date="1974" name="J. Biochem.">
        <title>Evidence for the identity of O-acetylserine sulfhydrylase with O-acetylhomoserine sulfhydrylase in yeast.</title>
        <authorList>
            <person name="Yamagata S."/>
            <person name="Takeshima K."/>
            <person name="Naiki N."/>
        </authorList>
    </citation>
    <scope>FUNCTION</scope>
    <scope>CATALYTIC ACTIVITY</scope>
    <scope>BIOPHYSICOCHEMICAL PROPERTIES</scope>
    <scope>COFACTOR</scope>
</reference>
<reference key="10">
    <citation type="journal article" date="1976" name="J. Biochem.">
        <title>O-acetylserine and O-acetylhomoserine sulfhydrylase of yeast. Further purification and characterization as a pyridoxal enzyme.</title>
        <authorList>
            <person name="Yamagata S."/>
            <person name="Takeshima K."/>
        </authorList>
    </citation>
    <scope>FUNCTION</scope>
    <scope>CATALYTIC ACTIVITY</scope>
    <scope>COFACTOR</scope>
</reference>
<reference key="11">
    <citation type="journal article" date="1976" name="J. Biochem.">
        <title>O-acetylserine and O-acetylhomoserine sulfhydrylase of yeast. Subunit structure.</title>
        <authorList>
            <person name="Yamagata S."/>
        </authorList>
    </citation>
    <scope>SUBUNIT</scope>
</reference>
<reference key="12">
    <citation type="journal article" date="1987" name="Mol. Gen. Genet.">
        <title>Molecular genetics of met17 and met25 mutants of Saccharomyces cerevisiae: intragenic complementation between mutations of a single structural gene.</title>
        <authorList>
            <person name="D'Andrea R."/>
            <person name="Surdin-Kerjan Y."/>
            <person name="Pure G."/>
            <person name="Cherest H."/>
        </authorList>
    </citation>
    <scope>FUNCTION</scope>
</reference>
<reference key="13">
    <citation type="journal article" date="1991" name="Appl. Environ. Microbiol.">
        <title>Role of hydrosulfide ions (HS-) in methylmercury resistance in Saccharomyces cerevisiae.</title>
        <authorList>
            <person name="Ono B."/>
            <person name="Ishii N."/>
            <person name="Fujino S."/>
            <person name="Aoyama I."/>
        </authorList>
    </citation>
    <scope>GENE NAME</scope>
</reference>
<reference key="14">
    <citation type="journal article" date="1992" name="Genetics">
        <title>Genetic analysis of a new mutation conferring cysteine auxotrophy in Saccharomyces cerevisiae: updating of the sulfur metabolism pathway.</title>
        <authorList>
            <person name="Cherest H."/>
            <person name="Surdin-Kerjan Y."/>
        </authorList>
    </citation>
    <scope>PATHWAY</scope>
</reference>
<reference key="15">
    <citation type="journal article" date="2002" name="Genes Dev.">
        <title>Subcellular localization of the yeast proteome.</title>
        <authorList>
            <person name="Kumar A."/>
            <person name="Agarwal S."/>
            <person name="Heyman J.A."/>
            <person name="Matson S."/>
            <person name="Heidtman M."/>
            <person name="Piccirillo S."/>
            <person name="Umansky L."/>
            <person name="Drawid A."/>
            <person name="Jansen R."/>
            <person name="Liu Y."/>
            <person name="Cheung K.-H."/>
            <person name="Miller P."/>
            <person name="Gerstein M."/>
            <person name="Roeder G.S."/>
            <person name="Snyder M."/>
        </authorList>
    </citation>
    <scope>SUBCELLULAR LOCATION [LARGE SCALE ANALYSIS]</scope>
</reference>
<reference key="16">
    <citation type="journal article" date="2003" name="FEMS Microbiol. Lett.">
        <title>Role of Saccharomyces cerevisiae serine O-acetyltransferase in cysteine biosynthesis.</title>
        <authorList>
            <person name="Takagi H."/>
            <person name="Yoshioka K."/>
            <person name="Awano N."/>
            <person name="Nakamori S."/>
            <person name="Ono B."/>
        </authorList>
    </citation>
    <scope>PATHWAY</scope>
</reference>
<reference key="17">
    <citation type="journal article" date="2007" name="J. Proteome Res.">
        <title>Large-scale phosphorylation analysis of alpha-factor-arrested Saccharomyces cerevisiae.</title>
        <authorList>
            <person name="Li X."/>
            <person name="Gerber S.A."/>
            <person name="Rudner A.D."/>
            <person name="Beausoleil S.A."/>
            <person name="Haas W."/>
            <person name="Villen J."/>
            <person name="Elias J.E."/>
            <person name="Gygi S.P."/>
        </authorList>
    </citation>
    <scope>PHOSPHORYLATION [LARGE SCALE ANALYSIS] AT SER-44</scope>
    <scope>IDENTIFICATION BY MASS SPECTROMETRY [LARGE SCALE ANALYSIS]</scope>
    <source>
        <strain>ADR376</strain>
    </source>
</reference>
<reference key="18">
    <citation type="journal article" date="2008" name="Mol. Cell. Proteomics">
        <title>A multidimensional chromatography technology for in-depth phosphoproteome analysis.</title>
        <authorList>
            <person name="Albuquerque C.P."/>
            <person name="Smolka M.B."/>
            <person name="Payne S.H."/>
            <person name="Bafna V."/>
            <person name="Eng J."/>
            <person name="Zhou H."/>
        </authorList>
    </citation>
    <scope>PHOSPHORYLATION [LARGE SCALE ANALYSIS] AT SER-44</scope>
    <scope>IDENTIFICATION BY MASS SPECTROMETRY [LARGE SCALE ANALYSIS]</scope>
</reference>
<reference key="19">
    <citation type="journal article" date="2012" name="Proteomics">
        <title>Sites of ubiquitin attachment in Saccharomyces cerevisiae.</title>
        <authorList>
            <person name="Starita L.M."/>
            <person name="Lo R.S."/>
            <person name="Eng J.K."/>
            <person name="von Haller P.D."/>
            <person name="Fields S."/>
        </authorList>
    </citation>
    <scope>UBIQUITINATION [LARGE SCALE ANALYSIS] AT LYS-160</scope>
    <scope>IDENTIFICATION BY MASS SPECTROMETRY [LARGE SCALE ANALYSIS]</scope>
</reference>
<reference key="20">
    <citation type="journal article" date="2022" name="J. Biol. Chem.">
        <title>On the illusion of auxotrophy: met15Delta yeast cells can grow on inorganic sulfur thanks to the previously uncharacterized homocysteine synthase Yll058w.</title>
        <authorList>
            <person name="Van Oss S.B."/>
            <person name="Parikh S.B."/>
            <person name="Coelho N.C."/>
            <person name="Wacholder A."/>
            <person name="Belashov I."/>
            <person name="Zdancewicz S."/>
            <person name="Michaca M."/>
            <person name="Xu J."/>
            <person name="Kang Y.P."/>
            <person name="Ward N.P."/>
            <person name="Yoon S.J."/>
            <person name="McCourt K.M."/>
            <person name="McKee J."/>
            <person name="Ideker T."/>
            <person name="VanDemark A.P."/>
            <person name="DeNicola G.M."/>
            <person name="Carvunis A.R."/>
        </authorList>
    </citation>
    <scope>FUNCTION</scope>
    <scope>CATALYTIC ACTIVITY</scope>
    <scope>BIOPHYSICOCHEMICAL PROPERTIES</scope>
    <scope>DISRUPTION PHENOTYPE</scope>
</reference>
<reference key="21">
    <citation type="journal article" date="2022" name="PLoS Biol.">
        <title>Inorganic sulfur fixation via a new homocysteine synthase allows yeast cells to cooperatively compensate for methionine auxotrophy.</title>
        <authorList>
            <person name="Yu J.S.L."/>
            <person name="Heineike B.M."/>
            <person name="Hartl J."/>
            <person name="Aulakh S.K."/>
            <person name="Correia-Melo C."/>
            <person name="Lehmann A."/>
            <person name="Lemke O."/>
            <person name="Agostini F."/>
            <person name="Lee C.T."/>
            <person name="Demichev V."/>
            <person name="Messner C.B."/>
            <person name="Muelleder M."/>
            <person name="Ralser M."/>
        </authorList>
    </citation>
    <scope>FUNCTION</scope>
    <scope>CATALYTIC ACTIVITY</scope>
    <scope>DISRUPTION PHENOTYPE</scope>
</reference>